<comment type="function">
    <text evidence="3 4">Calcium-permeable stretch-activated channel component. Involved in mechano-stimulated calcium uptake mechanism and in mechanosensing in the primary root.</text>
</comment>
<comment type="activity regulation">
    <text evidence="3">Inhibited by GdCl(3), but not by verapamil.</text>
</comment>
<comment type="subcellular location">
    <subcellularLocation>
        <location evidence="3">Cell membrane</location>
        <topology evidence="3">Single-pass membrane protein</topology>
    </subcellularLocation>
</comment>
<comment type="alternative products">
    <event type="alternative splicing"/>
    <isoform>
        <id>Q8L7E9-1</id>
        <name>1</name>
        <sequence type="displayed"/>
    </isoform>
    <isoform>
        <id>Q8L7E9-2</id>
        <name>2</name>
        <sequence type="described" ref="VSP_040964"/>
    </isoform>
</comment>
<comment type="tissue specificity">
    <text evidence="3 4">Expressed in roots, leaves, stems, flowers and siliques. Expressed in vascular tissues of cotyledons, leaves and primary root, in the promeristem and adjacent elongation zone of the primary root and in the shoot apical meristem. Detected in the stele and endodermis, but not in the cortex, epidermis or root cap, including the columella. Not expressed in root hairs or in mesophyll cells of leaves and cotyledons.</text>
</comment>
<comment type="disruption phenotype">
    <text evidence="3 4">No visible phenotype when grown under normal conditions; due to partial redundancy with MCA2. The roots are unable to sense a change in the hardness of the growth medium. Mca1 and mca2 double mutant shows a strong growth defect.</text>
</comment>
<comment type="sequence caution" evidence="6">
    <conflict type="erroneous gene model prediction">
        <sequence resource="EMBL-CDS" id="CAA18486"/>
    </conflict>
</comment>
<comment type="sequence caution" evidence="6">
    <conflict type="erroneous gene model prediction">
        <sequence resource="EMBL-CDS" id="CAA21478"/>
    </conflict>
</comment>
<comment type="sequence caution" evidence="6">
    <conflict type="erroneous gene model prediction">
        <sequence resource="EMBL-CDS" id="CAB81501"/>
    </conflict>
</comment>
<name>MCAC1_ARATH</name>
<keyword id="KW-0025">Alternative splicing</keyword>
<keyword id="KW-1003">Cell membrane</keyword>
<keyword id="KW-0175">Coiled coil</keyword>
<keyword id="KW-0472">Membrane</keyword>
<keyword id="KW-1185">Reference proteome</keyword>
<keyword id="KW-0812">Transmembrane</keyword>
<keyword id="KW-1133">Transmembrane helix</keyword>
<dbReference type="EMBL" id="AB196960">
    <property type="protein sequence ID" value="BAF46389.1"/>
    <property type="molecule type" value="mRNA"/>
</dbReference>
<dbReference type="EMBL" id="AL022373">
    <property type="protein sequence ID" value="CAA18486.1"/>
    <property type="status" value="ALT_SEQ"/>
    <property type="molecule type" value="Genomic_DNA"/>
</dbReference>
<dbReference type="EMBL" id="AL031986">
    <property type="protein sequence ID" value="CAA21478.1"/>
    <property type="status" value="ALT_SEQ"/>
    <property type="molecule type" value="Genomic_DNA"/>
</dbReference>
<dbReference type="EMBL" id="AL161588">
    <property type="protein sequence ID" value="CAB81501.1"/>
    <property type="status" value="ALT_SEQ"/>
    <property type="molecule type" value="Genomic_DNA"/>
</dbReference>
<dbReference type="EMBL" id="CP002687">
    <property type="protein sequence ID" value="AEE86589.1"/>
    <property type="molecule type" value="Genomic_DNA"/>
</dbReference>
<dbReference type="EMBL" id="CP002687">
    <property type="protein sequence ID" value="AEE86590.1"/>
    <property type="molecule type" value="Genomic_DNA"/>
</dbReference>
<dbReference type="EMBL" id="CP002687">
    <property type="protein sequence ID" value="AEE86591.1"/>
    <property type="molecule type" value="Genomic_DNA"/>
</dbReference>
<dbReference type="EMBL" id="CP002687">
    <property type="protein sequence ID" value="ANM67921.1"/>
    <property type="molecule type" value="Genomic_DNA"/>
</dbReference>
<dbReference type="EMBL" id="CP002687">
    <property type="protein sequence ID" value="ANM67922.1"/>
    <property type="molecule type" value="Genomic_DNA"/>
</dbReference>
<dbReference type="EMBL" id="AY136293">
    <property type="protein sequence ID" value="AAM96959.1"/>
    <property type="molecule type" value="mRNA"/>
</dbReference>
<dbReference type="EMBL" id="BT003430">
    <property type="protein sequence ID" value="AAO30093.1"/>
    <property type="molecule type" value="mRNA"/>
</dbReference>
<dbReference type="EMBL" id="AF367322">
    <property type="protein sequence ID" value="AAK32909.1"/>
    <property type="molecule type" value="mRNA"/>
</dbReference>
<dbReference type="EMBL" id="AY133604">
    <property type="protein sequence ID" value="AAM91434.1"/>
    <property type="molecule type" value="mRNA"/>
</dbReference>
<dbReference type="EMBL" id="AK316845">
    <property type="protein sequence ID" value="BAH19557.1"/>
    <property type="molecule type" value="mRNA"/>
</dbReference>
<dbReference type="PIR" id="T04702">
    <property type="entry name" value="T04702"/>
</dbReference>
<dbReference type="RefSeq" id="NP_001329715.1">
    <molecule id="Q8L7E9-1"/>
    <property type="nucleotide sequence ID" value="NM_001342380.1"/>
</dbReference>
<dbReference type="RefSeq" id="NP_001329716.1">
    <molecule id="Q8L7E9-1"/>
    <property type="nucleotide sequence ID" value="NM_001342381.1"/>
</dbReference>
<dbReference type="RefSeq" id="NP_195317.2">
    <molecule id="Q8L7E9-1"/>
    <property type="nucleotide sequence ID" value="NM_119759.4"/>
</dbReference>
<dbReference type="RefSeq" id="NP_849503.1">
    <molecule id="Q8L7E9-1"/>
    <property type="nucleotide sequence ID" value="NM_179172.3"/>
</dbReference>
<dbReference type="RefSeq" id="NP_849504.2">
    <molecule id="Q8L7E9-1"/>
    <property type="nucleotide sequence ID" value="NM_179173.4"/>
</dbReference>
<dbReference type="SMR" id="Q8L7E9"/>
<dbReference type="FunCoup" id="Q8L7E9">
    <property type="interactions" value="1836"/>
</dbReference>
<dbReference type="STRING" id="3702.Q8L7E9"/>
<dbReference type="TCDB" id="1.A.87.1.1">
    <property type="family name" value="the mechanosensitive calcium channel (mca) family"/>
</dbReference>
<dbReference type="iPTMnet" id="Q8L7E9"/>
<dbReference type="PaxDb" id="3702-AT4G35920.1"/>
<dbReference type="ProteomicsDB" id="238820">
    <molecule id="Q8L7E9-1"/>
</dbReference>
<dbReference type="EnsemblPlants" id="AT4G35920.1">
    <molecule id="Q8L7E9-1"/>
    <property type="protein sequence ID" value="AT4G35920.1"/>
    <property type="gene ID" value="AT4G35920"/>
</dbReference>
<dbReference type="EnsemblPlants" id="AT4G35920.2">
    <molecule id="Q8L7E9-1"/>
    <property type="protein sequence ID" value="AT4G35920.2"/>
    <property type="gene ID" value="AT4G35920"/>
</dbReference>
<dbReference type="EnsemblPlants" id="AT4G35920.3">
    <molecule id="Q8L7E9-1"/>
    <property type="protein sequence ID" value="AT4G35920.3"/>
    <property type="gene ID" value="AT4G35920"/>
</dbReference>
<dbReference type="EnsemblPlants" id="AT4G35920.4">
    <molecule id="Q8L7E9-1"/>
    <property type="protein sequence ID" value="AT4G35920.4"/>
    <property type="gene ID" value="AT4G35920"/>
</dbReference>
<dbReference type="EnsemblPlants" id="AT4G35920.5">
    <molecule id="Q8L7E9-1"/>
    <property type="protein sequence ID" value="AT4G35920.5"/>
    <property type="gene ID" value="AT4G35920"/>
</dbReference>
<dbReference type="GeneID" id="829747"/>
<dbReference type="Gramene" id="AT4G35920.1">
    <molecule id="Q8L7E9-1"/>
    <property type="protein sequence ID" value="AT4G35920.1"/>
    <property type="gene ID" value="AT4G35920"/>
</dbReference>
<dbReference type="Gramene" id="AT4G35920.2">
    <molecule id="Q8L7E9-1"/>
    <property type="protein sequence ID" value="AT4G35920.2"/>
    <property type="gene ID" value="AT4G35920"/>
</dbReference>
<dbReference type="Gramene" id="AT4G35920.3">
    <molecule id="Q8L7E9-1"/>
    <property type="protein sequence ID" value="AT4G35920.3"/>
    <property type="gene ID" value="AT4G35920"/>
</dbReference>
<dbReference type="Gramene" id="AT4G35920.4">
    <molecule id="Q8L7E9-1"/>
    <property type="protein sequence ID" value="AT4G35920.4"/>
    <property type="gene ID" value="AT4G35920"/>
</dbReference>
<dbReference type="Gramene" id="AT4G35920.5">
    <molecule id="Q8L7E9-1"/>
    <property type="protein sequence ID" value="AT4G35920.5"/>
    <property type="gene ID" value="AT4G35920"/>
</dbReference>
<dbReference type="KEGG" id="ath:AT4G35920"/>
<dbReference type="Araport" id="AT4G35920"/>
<dbReference type="TAIR" id="AT4G35920">
    <property type="gene designation" value="MCA1"/>
</dbReference>
<dbReference type="eggNOG" id="ENOG502QQIG">
    <property type="taxonomic scope" value="Eukaryota"/>
</dbReference>
<dbReference type="HOGENOM" id="CLU_738527_0_0_1"/>
<dbReference type="InParanoid" id="Q8L7E9"/>
<dbReference type="OMA" id="SHTHEEW"/>
<dbReference type="OrthoDB" id="1045822at2759"/>
<dbReference type="PhylomeDB" id="Q8L7E9"/>
<dbReference type="PRO" id="PR:Q8L7E9"/>
<dbReference type="Proteomes" id="UP000006548">
    <property type="component" value="Chromosome 4"/>
</dbReference>
<dbReference type="ExpressionAtlas" id="Q8L7E9">
    <property type="expression patterns" value="baseline and differential"/>
</dbReference>
<dbReference type="GO" id="GO:0005886">
    <property type="term" value="C:plasma membrane"/>
    <property type="evidence" value="ECO:0007669"/>
    <property type="project" value="UniProtKB-SubCell"/>
</dbReference>
<dbReference type="GO" id="GO:0005262">
    <property type="term" value="F:calcium channel activity"/>
    <property type="evidence" value="ECO:0000314"/>
    <property type="project" value="TAIR"/>
</dbReference>
<dbReference type="GO" id="GO:0006816">
    <property type="term" value="P:calcium ion transport"/>
    <property type="evidence" value="ECO:0000315"/>
    <property type="project" value="TAIR"/>
</dbReference>
<dbReference type="GO" id="GO:0033500">
    <property type="term" value="P:carbohydrate homeostasis"/>
    <property type="evidence" value="ECO:0000315"/>
    <property type="project" value="TAIR"/>
</dbReference>
<dbReference type="GO" id="GO:0007166">
    <property type="term" value="P:cell surface receptor signaling pathway"/>
    <property type="evidence" value="ECO:0007669"/>
    <property type="project" value="InterPro"/>
</dbReference>
<dbReference type="GO" id="GO:0071260">
    <property type="term" value="P:cellular response to mechanical stimulus"/>
    <property type="evidence" value="ECO:0000315"/>
    <property type="project" value="TAIR"/>
</dbReference>
<dbReference type="GO" id="GO:0007231">
    <property type="term" value="P:osmosensory signaling pathway"/>
    <property type="evidence" value="ECO:0000315"/>
    <property type="project" value="TAIR"/>
</dbReference>
<dbReference type="CDD" id="cd21037">
    <property type="entry name" value="MLKL_NTD"/>
    <property type="match status" value="1"/>
</dbReference>
<dbReference type="FunFam" id="1.20.930.20:FF:000003">
    <property type="entry name" value="DNA mismatch repair protein MLH1"/>
    <property type="match status" value="1"/>
</dbReference>
<dbReference type="Gene3D" id="1.20.930.20">
    <property type="entry name" value="Adaptor protein Cbl, N-terminal domain"/>
    <property type="match status" value="1"/>
</dbReference>
<dbReference type="InterPro" id="IPR036537">
    <property type="entry name" value="Adaptor_Cbl_N_dom_sf"/>
</dbReference>
<dbReference type="InterPro" id="IPR045766">
    <property type="entry name" value="MCAfunc"/>
</dbReference>
<dbReference type="InterPro" id="IPR006461">
    <property type="entry name" value="PLAC_motif_containing"/>
</dbReference>
<dbReference type="NCBIfam" id="TIGR01571">
    <property type="entry name" value="A_thal_Cys_rich"/>
    <property type="match status" value="1"/>
</dbReference>
<dbReference type="PANTHER" id="PTHR46604">
    <property type="entry name" value="PROTEIN MID1-COMPLEMENTING ACTIVITY 1"/>
    <property type="match status" value="1"/>
</dbReference>
<dbReference type="PANTHER" id="PTHR46604:SF3">
    <property type="entry name" value="PROTEIN MID1-COMPLEMENTING ACTIVITY 1"/>
    <property type="match status" value="1"/>
</dbReference>
<dbReference type="Pfam" id="PF19584">
    <property type="entry name" value="MCAfunc"/>
    <property type="match status" value="1"/>
</dbReference>
<dbReference type="Pfam" id="PF04749">
    <property type="entry name" value="PLAC8"/>
    <property type="match status" value="1"/>
</dbReference>
<evidence type="ECO:0000255" key="1"/>
<evidence type="ECO:0000256" key="2">
    <source>
        <dbReference type="SAM" id="MobiDB-lite"/>
    </source>
</evidence>
<evidence type="ECO:0000269" key="3">
    <source>
    </source>
</evidence>
<evidence type="ECO:0000269" key="4">
    <source>
    </source>
</evidence>
<evidence type="ECO:0000303" key="5">
    <source>
    </source>
</evidence>
<evidence type="ECO:0000305" key="6"/>
<proteinExistence type="evidence at protein level"/>
<reference key="1">
    <citation type="journal article" date="2007" name="Proc. Natl. Acad. Sci. U.S.A.">
        <title>Arabidopsis plasma membrane protein crucial for Ca2+ influx and touch sensing in roots.</title>
        <authorList>
            <person name="Nakagawa Y."/>
            <person name="Katagiri T."/>
            <person name="Shinozaki K."/>
            <person name="Qi Z."/>
            <person name="Tatsumi H."/>
            <person name="Furuichi T."/>
            <person name="Kishigami A."/>
            <person name="Sokabe M."/>
            <person name="Kojima I."/>
            <person name="Sato S."/>
            <person name="Kato T."/>
            <person name="Tabata S."/>
            <person name="Iida K."/>
            <person name="Terashima A."/>
            <person name="Nakano M."/>
            <person name="Ikeda M."/>
            <person name="Yamanaka T."/>
            <person name="Iida H."/>
        </authorList>
    </citation>
    <scope>NUCLEOTIDE SEQUENCE [MRNA] (ISOFORM 1)</scope>
    <scope>FUNCTION</scope>
    <scope>TISSUE SPECIFICITY</scope>
    <scope>SUBCELLULAR LOCATION</scope>
    <scope>ACTIVITY REGULATION</scope>
    <scope>DISRUPTION PHENOTYPE</scope>
</reference>
<reference key="2">
    <citation type="journal article" date="1999" name="Nature">
        <title>Sequence and analysis of chromosome 4 of the plant Arabidopsis thaliana.</title>
        <authorList>
            <person name="Mayer K.F.X."/>
            <person name="Schueller C."/>
            <person name="Wambutt R."/>
            <person name="Murphy G."/>
            <person name="Volckaert G."/>
            <person name="Pohl T."/>
            <person name="Duesterhoeft A."/>
            <person name="Stiekema W."/>
            <person name="Entian K.-D."/>
            <person name="Terryn N."/>
            <person name="Harris B."/>
            <person name="Ansorge W."/>
            <person name="Brandt P."/>
            <person name="Grivell L.A."/>
            <person name="Rieger M."/>
            <person name="Weichselgartner M."/>
            <person name="de Simone V."/>
            <person name="Obermaier B."/>
            <person name="Mache R."/>
            <person name="Mueller M."/>
            <person name="Kreis M."/>
            <person name="Delseny M."/>
            <person name="Puigdomenech P."/>
            <person name="Watson M."/>
            <person name="Schmidtheini T."/>
            <person name="Reichert B."/>
            <person name="Portetelle D."/>
            <person name="Perez-Alonso M."/>
            <person name="Boutry M."/>
            <person name="Bancroft I."/>
            <person name="Vos P."/>
            <person name="Hoheisel J."/>
            <person name="Zimmermann W."/>
            <person name="Wedler H."/>
            <person name="Ridley P."/>
            <person name="Langham S.-A."/>
            <person name="McCullagh B."/>
            <person name="Bilham L."/>
            <person name="Robben J."/>
            <person name="van der Schueren J."/>
            <person name="Grymonprez B."/>
            <person name="Chuang Y.-J."/>
            <person name="Vandenbussche F."/>
            <person name="Braeken M."/>
            <person name="Weltjens I."/>
            <person name="Voet M."/>
            <person name="Bastiaens I."/>
            <person name="Aert R."/>
            <person name="Defoor E."/>
            <person name="Weitzenegger T."/>
            <person name="Bothe G."/>
            <person name="Ramsperger U."/>
            <person name="Hilbert H."/>
            <person name="Braun M."/>
            <person name="Holzer E."/>
            <person name="Brandt A."/>
            <person name="Peters S."/>
            <person name="van Staveren M."/>
            <person name="Dirkse W."/>
            <person name="Mooijman P."/>
            <person name="Klein Lankhorst R."/>
            <person name="Rose M."/>
            <person name="Hauf J."/>
            <person name="Koetter P."/>
            <person name="Berneiser S."/>
            <person name="Hempel S."/>
            <person name="Feldpausch M."/>
            <person name="Lamberth S."/>
            <person name="Van den Daele H."/>
            <person name="De Keyser A."/>
            <person name="Buysshaert C."/>
            <person name="Gielen J."/>
            <person name="Villarroel R."/>
            <person name="De Clercq R."/>
            <person name="van Montagu M."/>
            <person name="Rogers J."/>
            <person name="Cronin A."/>
            <person name="Quail M.A."/>
            <person name="Bray-Allen S."/>
            <person name="Clark L."/>
            <person name="Doggett J."/>
            <person name="Hall S."/>
            <person name="Kay M."/>
            <person name="Lennard N."/>
            <person name="McLay K."/>
            <person name="Mayes R."/>
            <person name="Pettett A."/>
            <person name="Rajandream M.A."/>
            <person name="Lyne M."/>
            <person name="Benes V."/>
            <person name="Rechmann S."/>
            <person name="Borkova D."/>
            <person name="Bloecker H."/>
            <person name="Scharfe M."/>
            <person name="Grimm M."/>
            <person name="Loehnert T.-H."/>
            <person name="Dose S."/>
            <person name="de Haan M."/>
            <person name="Maarse A.C."/>
            <person name="Schaefer M."/>
            <person name="Mueller-Auer S."/>
            <person name="Gabel C."/>
            <person name="Fuchs M."/>
            <person name="Fartmann B."/>
            <person name="Granderath K."/>
            <person name="Dauner D."/>
            <person name="Herzl A."/>
            <person name="Neumann S."/>
            <person name="Argiriou A."/>
            <person name="Vitale D."/>
            <person name="Liguori R."/>
            <person name="Piravandi E."/>
            <person name="Massenet O."/>
            <person name="Quigley F."/>
            <person name="Clabauld G."/>
            <person name="Muendlein A."/>
            <person name="Felber R."/>
            <person name="Schnabl S."/>
            <person name="Hiller R."/>
            <person name="Schmidt W."/>
            <person name="Lecharny A."/>
            <person name="Aubourg S."/>
            <person name="Chefdor F."/>
            <person name="Cooke R."/>
            <person name="Berger C."/>
            <person name="Monfort A."/>
            <person name="Casacuberta E."/>
            <person name="Gibbons T."/>
            <person name="Weber N."/>
            <person name="Vandenbol M."/>
            <person name="Bargues M."/>
            <person name="Terol J."/>
            <person name="Torres A."/>
            <person name="Perez-Perez A."/>
            <person name="Purnelle B."/>
            <person name="Bent E."/>
            <person name="Johnson S."/>
            <person name="Tacon D."/>
            <person name="Jesse T."/>
            <person name="Heijnen L."/>
            <person name="Schwarz S."/>
            <person name="Scholler P."/>
            <person name="Heber S."/>
            <person name="Francs P."/>
            <person name="Bielke C."/>
            <person name="Frishman D."/>
            <person name="Haase D."/>
            <person name="Lemcke K."/>
            <person name="Mewes H.-W."/>
            <person name="Stocker S."/>
            <person name="Zaccaria P."/>
            <person name="Bevan M."/>
            <person name="Wilson R.K."/>
            <person name="de la Bastide M."/>
            <person name="Habermann K."/>
            <person name="Parnell L."/>
            <person name="Dedhia N."/>
            <person name="Gnoj L."/>
            <person name="Schutz K."/>
            <person name="Huang E."/>
            <person name="Spiegel L."/>
            <person name="Sekhon M."/>
            <person name="Murray J."/>
            <person name="Sheet P."/>
            <person name="Cordes M."/>
            <person name="Abu-Threideh J."/>
            <person name="Stoneking T."/>
            <person name="Kalicki J."/>
            <person name="Graves T."/>
            <person name="Harmon G."/>
            <person name="Edwards J."/>
            <person name="Latreille P."/>
            <person name="Courtney L."/>
            <person name="Cloud J."/>
            <person name="Abbott A."/>
            <person name="Scott K."/>
            <person name="Johnson D."/>
            <person name="Minx P."/>
            <person name="Bentley D."/>
            <person name="Fulton B."/>
            <person name="Miller N."/>
            <person name="Greco T."/>
            <person name="Kemp K."/>
            <person name="Kramer J."/>
            <person name="Fulton L."/>
            <person name="Mardis E."/>
            <person name="Dante M."/>
            <person name="Pepin K."/>
            <person name="Hillier L.W."/>
            <person name="Nelson J."/>
            <person name="Spieth J."/>
            <person name="Ryan E."/>
            <person name="Andrews S."/>
            <person name="Geisel C."/>
            <person name="Layman D."/>
            <person name="Du H."/>
            <person name="Ali J."/>
            <person name="Berghoff A."/>
            <person name="Jones K."/>
            <person name="Drone K."/>
            <person name="Cotton M."/>
            <person name="Joshu C."/>
            <person name="Antonoiu B."/>
            <person name="Zidanic M."/>
            <person name="Strong C."/>
            <person name="Sun H."/>
            <person name="Lamar B."/>
            <person name="Yordan C."/>
            <person name="Ma P."/>
            <person name="Zhong J."/>
            <person name="Preston R."/>
            <person name="Vil D."/>
            <person name="Shekher M."/>
            <person name="Matero A."/>
            <person name="Shah R."/>
            <person name="Swaby I.K."/>
            <person name="O'Shaughnessy A."/>
            <person name="Rodriguez M."/>
            <person name="Hoffman J."/>
            <person name="Till S."/>
            <person name="Granat S."/>
            <person name="Shohdy N."/>
            <person name="Hasegawa A."/>
            <person name="Hameed A."/>
            <person name="Lodhi M."/>
            <person name="Johnson A."/>
            <person name="Chen E."/>
            <person name="Marra M.A."/>
            <person name="Martienssen R."/>
            <person name="McCombie W.R."/>
        </authorList>
    </citation>
    <scope>NUCLEOTIDE SEQUENCE [LARGE SCALE GENOMIC DNA]</scope>
    <source>
        <strain>cv. Columbia</strain>
    </source>
</reference>
<reference key="3">
    <citation type="journal article" date="2017" name="Plant J.">
        <title>Araport11: a complete reannotation of the Arabidopsis thaliana reference genome.</title>
        <authorList>
            <person name="Cheng C.Y."/>
            <person name="Krishnakumar V."/>
            <person name="Chan A.P."/>
            <person name="Thibaud-Nissen F."/>
            <person name="Schobel S."/>
            <person name="Town C.D."/>
        </authorList>
    </citation>
    <scope>GENOME REANNOTATION</scope>
    <source>
        <strain>cv. Columbia</strain>
    </source>
</reference>
<reference key="4">
    <citation type="journal article" date="2003" name="Science">
        <title>Empirical analysis of transcriptional activity in the Arabidopsis genome.</title>
        <authorList>
            <person name="Yamada K."/>
            <person name="Lim J."/>
            <person name="Dale J.M."/>
            <person name="Chen H."/>
            <person name="Shinn P."/>
            <person name="Palm C.J."/>
            <person name="Southwick A.M."/>
            <person name="Wu H.C."/>
            <person name="Kim C.J."/>
            <person name="Nguyen M."/>
            <person name="Pham P.K."/>
            <person name="Cheuk R.F."/>
            <person name="Karlin-Newmann G."/>
            <person name="Liu S.X."/>
            <person name="Lam B."/>
            <person name="Sakano H."/>
            <person name="Wu T."/>
            <person name="Yu G."/>
            <person name="Miranda M."/>
            <person name="Quach H.L."/>
            <person name="Tripp M."/>
            <person name="Chang C.H."/>
            <person name="Lee J.M."/>
            <person name="Toriumi M.J."/>
            <person name="Chan M.M."/>
            <person name="Tang C.C."/>
            <person name="Onodera C.S."/>
            <person name="Deng J.M."/>
            <person name="Akiyama K."/>
            <person name="Ansari Y."/>
            <person name="Arakawa T."/>
            <person name="Banh J."/>
            <person name="Banno F."/>
            <person name="Bowser L."/>
            <person name="Brooks S.Y."/>
            <person name="Carninci P."/>
            <person name="Chao Q."/>
            <person name="Choy N."/>
            <person name="Enju A."/>
            <person name="Goldsmith A.D."/>
            <person name="Gurjal M."/>
            <person name="Hansen N.F."/>
            <person name="Hayashizaki Y."/>
            <person name="Johnson-Hopson C."/>
            <person name="Hsuan V.W."/>
            <person name="Iida K."/>
            <person name="Karnes M."/>
            <person name="Khan S."/>
            <person name="Koesema E."/>
            <person name="Ishida J."/>
            <person name="Jiang P.X."/>
            <person name="Jones T."/>
            <person name="Kawai J."/>
            <person name="Kamiya A."/>
            <person name="Meyers C."/>
            <person name="Nakajima M."/>
            <person name="Narusaka M."/>
            <person name="Seki M."/>
            <person name="Sakurai T."/>
            <person name="Satou M."/>
            <person name="Tamse R."/>
            <person name="Vaysberg M."/>
            <person name="Wallender E.K."/>
            <person name="Wong C."/>
            <person name="Yamamura Y."/>
            <person name="Yuan S."/>
            <person name="Shinozaki K."/>
            <person name="Davis R.W."/>
            <person name="Theologis A."/>
            <person name="Ecker J.R."/>
        </authorList>
    </citation>
    <scope>NUCLEOTIDE SEQUENCE [LARGE SCALE MRNA] (ISOFORMS 1 AND 2)</scope>
    <source>
        <strain>cv. Columbia</strain>
    </source>
</reference>
<reference key="5">
    <citation type="journal article" date="2009" name="DNA Res.">
        <title>Analysis of multiple occurrences of alternative splicing events in Arabidopsis thaliana using novel sequenced full-length cDNAs.</title>
        <authorList>
            <person name="Iida K."/>
            <person name="Fukami-Kobayashi K."/>
            <person name="Toyoda A."/>
            <person name="Sakaki Y."/>
            <person name="Kobayashi M."/>
            <person name="Seki M."/>
            <person name="Shinozaki K."/>
        </authorList>
    </citation>
    <scope>NUCLEOTIDE SEQUENCE [LARGE SCALE MRNA] (ISOFORM 1)</scope>
    <source>
        <strain>cv. Columbia</strain>
    </source>
</reference>
<reference key="6">
    <citation type="journal article" date="2009" name="Plant Physiol.">
        <title>Large-scale Arabidopsis phosphoproteome profiling reveals novel chloroplast kinase substrates and phosphorylation networks.</title>
        <authorList>
            <person name="Reiland S."/>
            <person name="Messerli G."/>
            <person name="Baerenfaller K."/>
            <person name="Gerrits B."/>
            <person name="Endler A."/>
            <person name="Grossmann J."/>
            <person name="Gruissem W."/>
            <person name="Baginsky S."/>
        </authorList>
    </citation>
    <scope>IDENTIFICATION BY MASS SPECTROMETRY [LARGE SCALE ANALYSIS]</scope>
</reference>
<reference key="7">
    <citation type="journal article" date="2010" name="Plant Physiol.">
        <title>MCA1 and MCA2 that mediate Ca2+ uptake have distinct and overlapping roles in Arabidopsis.</title>
        <authorList>
            <person name="Yamanaka T."/>
            <person name="Nakagawa Y."/>
            <person name="Mori K."/>
            <person name="Nakano M."/>
            <person name="Imamura T."/>
            <person name="Kataoka H."/>
            <person name="Terashima A."/>
            <person name="Iida K."/>
            <person name="Kojima I."/>
            <person name="Katagiri T."/>
            <person name="Shinozaki K."/>
            <person name="Iida H."/>
        </authorList>
    </citation>
    <scope>FUNCTION</scope>
    <scope>TISSUE SPECIFICITY</scope>
    <scope>DISRUPTION PHENOTYPE</scope>
</reference>
<gene>
    <name type="primary">MCA1</name>
    <name type="ordered locus">At4g35920</name>
    <name type="ORF">T19K4.50</name>
</gene>
<sequence>MSHSWDGLGEIASVAQLTGLDAVKLIGLIVKAANTAWMHKKNCRQFAQHLKLIGNLLEQLKISEMKKYPETREPLEGLEDALRRSYLLVNSCRDRSYLYLLAMGWNIVYQFRKHQDEIDRFLKIIPLITLVDNARIRERFEYIDRDQREYTLDEEDRHVQDVILKQESTREAASVLKKTLSCSYPNLRFCEALKTENEKLQIELQRSQEHYDVAQCEVIQRLIGVTQAAAAVEPDSEKELTKKASKKSERSSSMKTEYSYDEDSPKKSSTRAASRSTSNVSSGHDLLSRRASQAQHHEEWHTDLLACCSEPSLCFKTFFFPCGTLAKIATAASNRHISSAEACNELMAYSLILSCCCYTCCVRRKLRKTLNITGGFIDDFLSHVMCCCCALVQELREVEIRGAYGTEKTKISPPSSQFMEH</sequence>
<organism>
    <name type="scientific">Arabidopsis thaliana</name>
    <name type="common">Mouse-ear cress</name>
    <dbReference type="NCBI Taxonomy" id="3702"/>
    <lineage>
        <taxon>Eukaryota</taxon>
        <taxon>Viridiplantae</taxon>
        <taxon>Streptophyta</taxon>
        <taxon>Embryophyta</taxon>
        <taxon>Tracheophyta</taxon>
        <taxon>Spermatophyta</taxon>
        <taxon>Magnoliopsida</taxon>
        <taxon>eudicotyledons</taxon>
        <taxon>Gunneridae</taxon>
        <taxon>Pentapetalae</taxon>
        <taxon>rosids</taxon>
        <taxon>malvids</taxon>
        <taxon>Brassicales</taxon>
        <taxon>Brassicaceae</taxon>
        <taxon>Camelineae</taxon>
        <taxon>Arabidopsis</taxon>
    </lineage>
</organism>
<feature type="chain" id="PRO_0000407741" description="Protein MID1-COMPLEMENTING ACTIVITY 1">
    <location>
        <begin position="1"/>
        <end position="421"/>
    </location>
</feature>
<feature type="transmembrane region" description="Helical" evidence="1">
    <location>
        <begin position="346"/>
        <end position="362"/>
    </location>
</feature>
<feature type="region of interest" description="Disordered" evidence="2">
    <location>
        <begin position="233"/>
        <end position="288"/>
    </location>
</feature>
<feature type="coiled-coil region" evidence="1">
    <location>
        <begin position="188"/>
        <end position="218"/>
    </location>
</feature>
<feature type="compositionally biased region" description="Basic and acidic residues" evidence="2">
    <location>
        <begin position="235"/>
        <end position="252"/>
    </location>
</feature>
<feature type="compositionally biased region" description="Low complexity" evidence="2">
    <location>
        <begin position="270"/>
        <end position="282"/>
    </location>
</feature>
<feature type="splice variant" id="VSP_040964" description="In isoform 2." evidence="5">
    <original>GTEKTKISPPSSQFMEH</original>
    <variation>DLCRYGEDENKPAFVAVHGTLKSSIIQKVNKNNDLL</variation>
    <location>
        <begin position="405"/>
        <end position="421"/>
    </location>
</feature>
<protein>
    <recommendedName>
        <fullName>Protein MID1-COMPLEMENTING ACTIVITY 1</fullName>
    </recommendedName>
</protein>
<accession>Q8L7E9</accession>
<accession>O65629</accession>
<accession>Q9ASR5</accession>